<comment type="function">
    <text evidence="1">Galactokinase is a key enzyme in the galactose metabolism where it catalyzes the conversion of alpha-D-galactose to galactose 1-phosphate (By similarity). Can also induce the transcription of the gal genes in response to the organism being challenged with galactose as the sole source of carbon (By similarity).</text>
</comment>
<comment type="catalytic activity">
    <reaction evidence="1">
        <text>alpha-D-galactose + ATP = alpha-D-galactose 1-phosphate + ADP + H(+)</text>
        <dbReference type="Rhea" id="RHEA:13553"/>
        <dbReference type="ChEBI" id="CHEBI:15378"/>
        <dbReference type="ChEBI" id="CHEBI:28061"/>
        <dbReference type="ChEBI" id="CHEBI:30616"/>
        <dbReference type="ChEBI" id="CHEBI:58336"/>
        <dbReference type="ChEBI" id="CHEBI:456216"/>
        <dbReference type="EC" id="2.7.1.6"/>
    </reaction>
    <physiologicalReaction direction="left-to-right" evidence="1">
        <dbReference type="Rhea" id="RHEA:13554"/>
    </physiologicalReaction>
</comment>
<comment type="pathway">
    <text evidence="1">Carbohydrate metabolism; galactose metabolism.</text>
</comment>
<comment type="similarity">
    <text evidence="3">Belongs to the GHMP kinase family. GalK subfamily.</text>
</comment>
<proteinExistence type="inferred from homology"/>
<feature type="chain" id="PRO_0000184656" description="Galactokinase">
    <location>
        <begin position="1"/>
        <end position="519"/>
    </location>
</feature>
<feature type="active site" description="Proton acceptor" evidence="2">
    <location>
        <position position="209"/>
    </location>
</feature>
<feature type="binding site" evidence="1">
    <location>
        <position position="47"/>
    </location>
    <ligand>
        <name>alpha-D-galactose</name>
        <dbReference type="ChEBI" id="CHEBI:28061"/>
    </ligand>
</feature>
<feature type="binding site" evidence="1">
    <location>
        <position position="53"/>
    </location>
    <ligand>
        <name>alpha-D-galactose</name>
        <dbReference type="ChEBI" id="CHEBI:28061"/>
    </ligand>
</feature>
<feature type="binding site" evidence="1">
    <location>
        <position position="54"/>
    </location>
    <ligand>
        <name>alpha-D-galactose</name>
        <dbReference type="ChEBI" id="CHEBI:28061"/>
    </ligand>
</feature>
<feature type="binding site" evidence="1">
    <location>
        <position position="56"/>
    </location>
    <ligand>
        <name>alpha-D-galactose</name>
        <dbReference type="ChEBI" id="CHEBI:28061"/>
    </ligand>
</feature>
<feature type="binding site" evidence="1">
    <location>
        <position position="159"/>
    </location>
    <ligand>
        <name>ATP</name>
        <dbReference type="ChEBI" id="CHEBI:30616"/>
    </ligand>
</feature>
<feature type="binding site" evidence="1">
    <location>
        <position position="161"/>
    </location>
    <ligand>
        <name>ATP</name>
        <dbReference type="ChEBI" id="CHEBI:30616"/>
    </ligand>
</feature>
<feature type="binding site" evidence="1">
    <location>
        <position position="163"/>
    </location>
    <ligand>
        <name>ATP</name>
        <dbReference type="ChEBI" id="CHEBI:30616"/>
    </ligand>
</feature>
<feature type="binding site" evidence="1">
    <location>
        <position position="164"/>
    </location>
    <ligand>
        <name>ATP</name>
        <dbReference type="ChEBI" id="CHEBI:30616"/>
    </ligand>
</feature>
<feature type="binding site" evidence="1">
    <location>
        <position position="209"/>
    </location>
    <ligand>
        <name>alpha-D-galactose</name>
        <dbReference type="ChEBI" id="CHEBI:28061"/>
    </ligand>
</feature>
<feature type="binding site" evidence="1">
    <location>
        <position position="257"/>
    </location>
    <ligand>
        <name>ATP</name>
        <dbReference type="ChEBI" id="CHEBI:30616"/>
    </ligand>
</feature>
<feature type="binding site" evidence="1">
    <location>
        <position position="258"/>
    </location>
    <ligand>
        <name>ATP</name>
        <dbReference type="ChEBI" id="CHEBI:30616"/>
    </ligand>
</feature>
<feature type="binding site" evidence="1">
    <location>
        <position position="266"/>
    </location>
    <ligand>
        <name>alpha-D-galactose</name>
        <dbReference type="ChEBI" id="CHEBI:28061"/>
    </ligand>
</feature>
<feature type="site" description="Transition state stabilizer" evidence="2">
    <location>
        <position position="47"/>
    </location>
</feature>
<gene>
    <name type="primary">gal1</name>
    <name type="ORF">SPBPB2B2.13</name>
</gene>
<protein>
    <recommendedName>
        <fullName evidence="1">Galactokinase</fullName>
        <ecNumber evidence="1">2.7.1.6</ecNumber>
    </recommendedName>
    <alternativeName>
        <fullName evidence="1">Galactose kinase</fullName>
    </alternativeName>
</protein>
<evidence type="ECO:0000250" key="1">
    <source>
        <dbReference type="UniProtKB" id="P04385"/>
    </source>
</evidence>
<evidence type="ECO:0000250" key="2">
    <source>
        <dbReference type="UniProtKB" id="Q9HHB6"/>
    </source>
</evidence>
<evidence type="ECO:0000305" key="3"/>
<keyword id="KW-0067">ATP-binding</keyword>
<keyword id="KW-0119">Carbohydrate metabolism</keyword>
<keyword id="KW-0299">Galactose metabolism</keyword>
<keyword id="KW-0418">Kinase</keyword>
<keyword id="KW-0547">Nucleotide-binding</keyword>
<keyword id="KW-1185">Reference proteome</keyword>
<keyword id="KW-0808">Transferase</keyword>
<dbReference type="EC" id="2.7.1.6" evidence="1"/>
<dbReference type="EMBL" id="CU329671">
    <property type="protein sequence ID" value="CAC21415.1"/>
    <property type="molecule type" value="Genomic_DNA"/>
</dbReference>
<dbReference type="RefSeq" id="NP_596859.1">
    <property type="nucleotide sequence ID" value="NM_001023882.2"/>
</dbReference>
<dbReference type="SMR" id="Q9HDU2"/>
<dbReference type="BioGRID" id="277891">
    <property type="interactions" value="36"/>
</dbReference>
<dbReference type="FunCoup" id="Q9HDU2">
    <property type="interactions" value="423"/>
</dbReference>
<dbReference type="STRING" id="284812.Q9HDU2"/>
<dbReference type="PaxDb" id="4896-SPBPB2B2.13.1"/>
<dbReference type="EnsemblFungi" id="SPBPB2B2.13.1">
    <property type="protein sequence ID" value="SPBPB2B2.13.1:pep"/>
    <property type="gene ID" value="SPBPB2B2.13"/>
</dbReference>
<dbReference type="GeneID" id="2541380"/>
<dbReference type="KEGG" id="spo:2541380"/>
<dbReference type="PomBase" id="SPBPB2B2.13">
    <property type="gene designation" value="gal1"/>
</dbReference>
<dbReference type="VEuPathDB" id="FungiDB:SPBPB2B2.13"/>
<dbReference type="eggNOG" id="KOG0631">
    <property type="taxonomic scope" value="Eukaryota"/>
</dbReference>
<dbReference type="HOGENOM" id="CLU_017814_6_2_1"/>
<dbReference type="InParanoid" id="Q9HDU2"/>
<dbReference type="OMA" id="GFHDTYF"/>
<dbReference type="PhylomeDB" id="Q9HDU2"/>
<dbReference type="UniPathway" id="UPA00214"/>
<dbReference type="PRO" id="PR:Q9HDU2"/>
<dbReference type="Proteomes" id="UP000002485">
    <property type="component" value="Chromosome II"/>
</dbReference>
<dbReference type="GO" id="GO:0005737">
    <property type="term" value="C:cytoplasm"/>
    <property type="evidence" value="ECO:0007005"/>
    <property type="project" value="PomBase"/>
</dbReference>
<dbReference type="GO" id="GO:0005829">
    <property type="term" value="C:cytosol"/>
    <property type="evidence" value="ECO:0007005"/>
    <property type="project" value="PomBase"/>
</dbReference>
<dbReference type="GO" id="GO:0005524">
    <property type="term" value="F:ATP binding"/>
    <property type="evidence" value="ECO:0007669"/>
    <property type="project" value="UniProtKB-KW"/>
</dbReference>
<dbReference type="GO" id="GO:0004335">
    <property type="term" value="F:galactokinase activity"/>
    <property type="evidence" value="ECO:0000318"/>
    <property type="project" value="GO_Central"/>
</dbReference>
<dbReference type="GO" id="GO:0006012">
    <property type="term" value="P:galactose metabolic process"/>
    <property type="evidence" value="ECO:0000318"/>
    <property type="project" value="GO_Central"/>
</dbReference>
<dbReference type="FunFam" id="1.20.1440.340:FF:000003">
    <property type="entry name" value="GAL1p Galactokinase"/>
    <property type="match status" value="1"/>
</dbReference>
<dbReference type="FunFam" id="3.30.230.10:FF:000056">
    <property type="entry name" value="GAL1p Galactokinase"/>
    <property type="match status" value="1"/>
</dbReference>
<dbReference type="Gene3D" id="1.20.1440.340">
    <property type="match status" value="1"/>
</dbReference>
<dbReference type="Gene3D" id="3.30.230.10">
    <property type="match status" value="1"/>
</dbReference>
<dbReference type="Gene3D" id="3.30.70.3170">
    <property type="match status" value="1"/>
</dbReference>
<dbReference type="InterPro" id="IPR000705">
    <property type="entry name" value="Galactokinase"/>
</dbReference>
<dbReference type="InterPro" id="IPR019741">
    <property type="entry name" value="Galactokinase_CS"/>
</dbReference>
<dbReference type="InterPro" id="IPR019539">
    <property type="entry name" value="GalKase_N"/>
</dbReference>
<dbReference type="InterPro" id="IPR013750">
    <property type="entry name" value="GHMP_kinase_C_dom"/>
</dbReference>
<dbReference type="InterPro" id="IPR036554">
    <property type="entry name" value="GHMP_kinase_C_sf"/>
</dbReference>
<dbReference type="InterPro" id="IPR006204">
    <property type="entry name" value="GHMP_kinase_N_dom"/>
</dbReference>
<dbReference type="InterPro" id="IPR006203">
    <property type="entry name" value="GHMP_knse_ATP-bd_CS"/>
</dbReference>
<dbReference type="InterPro" id="IPR006206">
    <property type="entry name" value="Mevalonate/galactokinase"/>
</dbReference>
<dbReference type="InterPro" id="IPR020568">
    <property type="entry name" value="Ribosomal_Su5_D2-typ_SF"/>
</dbReference>
<dbReference type="InterPro" id="IPR014721">
    <property type="entry name" value="Ribsml_uS5_D2-typ_fold_subgr"/>
</dbReference>
<dbReference type="NCBIfam" id="TIGR00131">
    <property type="entry name" value="gal_kin"/>
    <property type="match status" value="1"/>
</dbReference>
<dbReference type="PANTHER" id="PTHR10457:SF7">
    <property type="entry name" value="GALACTOKINASE-RELATED"/>
    <property type="match status" value="1"/>
</dbReference>
<dbReference type="PANTHER" id="PTHR10457">
    <property type="entry name" value="MEVALONATE KINASE/GALACTOKINASE"/>
    <property type="match status" value="1"/>
</dbReference>
<dbReference type="Pfam" id="PF10509">
    <property type="entry name" value="GalKase_gal_bdg"/>
    <property type="match status" value="1"/>
</dbReference>
<dbReference type="Pfam" id="PF08544">
    <property type="entry name" value="GHMP_kinases_C"/>
    <property type="match status" value="1"/>
</dbReference>
<dbReference type="Pfam" id="PF00288">
    <property type="entry name" value="GHMP_kinases_N"/>
    <property type="match status" value="1"/>
</dbReference>
<dbReference type="PIRSF" id="PIRSF000530">
    <property type="entry name" value="Galactokinase"/>
    <property type="match status" value="1"/>
</dbReference>
<dbReference type="PRINTS" id="PR00473">
    <property type="entry name" value="GALCTOKINASE"/>
</dbReference>
<dbReference type="PRINTS" id="PR00959">
    <property type="entry name" value="MEVGALKINASE"/>
</dbReference>
<dbReference type="SUPFAM" id="SSF55060">
    <property type="entry name" value="GHMP Kinase, C-terminal domain"/>
    <property type="match status" value="1"/>
</dbReference>
<dbReference type="SUPFAM" id="SSF54211">
    <property type="entry name" value="Ribosomal protein S5 domain 2-like"/>
    <property type="match status" value="1"/>
</dbReference>
<dbReference type="PROSITE" id="PS00106">
    <property type="entry name" value="GALACTOKINASE"/>
    <property type="match status" value="1"/>
</dbReference>
<dbReference type="PROSITE" id="PS00627">
    <property type="entry name" value="GHMP_KINASES_ATP"/>
    <property type="match status" value="1"/>
</dbReference>
<sequence length="519" mass="58385">MATVPTYHDLSFYSNPKENKARYAKLLNSFEQKYHCKPDFFSRSPGRVNIIGEHIDYNYFSVLPMAIDVDVIVSVTTSDDAKVELNNTNPEFKEEILELPSDGAVIEINKTHHTWGNYFRCSMIVAHKYILEKYPELVSGGKKPLKGLKLIFDGNVPTGGGLSSSAAFCVASILAILKANGINTITKEDLVKISVVSEHYVGVNTGGMDQCASIYGEQNKALLVQFKPKLMATPFKMPVLKPHDMVFLISNTLVEANKQETALTNYNLRVVEMAVASEFLAKKFNLELPKESNLHTGTLRGFMDEYYEKHLKQPHWDGSDIDMGVQRMQEMLRLTEIMFSEEQKVGFKTEELAKELGLSVEEFTKVFLTKIPVKYERMKIYQRTVHVYSDAMRVLQVLKLFHQHKDSDDPQKFMLAFGRLLNDSQRSEDIYNNSSSPELREVCKISLANGGYGARTTGAGWGGSAVHLTTHDKLAKLVEALTEQYYKKQFPKITQSELNAAVVVSKPAAGSCIVQLAEY</sequence>
<reference key="1">
    <citation type="journal article" date="2002" name="Nature">
        <title>The genome sequence of Schizosaccharomyces pombe.</title>
        <authorList>
            <person name="Wood V."/>
            <person name="Gwilliam R."/>
            <person name="Rajandream M.A."/>
            <person name="Lyne M.H."/>
            <person name="Lyne R."/>
            <person name="Stewart A."/>
            <person name="Sgouros J.G."/>
            <person name="Peat N."/>
            <person name="Hayles J."/>
            <person name="Baker S.G."/>
            <person name="Basham D."/>
            <person name="Bowman S."/>
            <person name="Brooks K."/>
            <person name="Brown D."/>
            <person name="Brown S."/>
            <person name="Chillingworth T."/>
            <person name="Churcher C.M."/>
            <person name="Collins M."/>
            <person name="Connor R."/>
            <person name="Cronin A."/>
            <person name="Davis P."/>
            <person name="Feltwell T."/>
            <person name="Fraser A."/>
            <person name="Gentles S."/>
            <person name="Goble A."/>
            <person name="Hamlin N."/>
            <person name="Harris D.E."/>
            <person name="Hidalgo J."/>
            <person name="Hodgson G."/>
            <person name="Holroyd S."/>
            <person name="Hornsby T."/>
            <person name="Howarth S."/>
            <person name="Huckle E.J."/>
            <person name="Hunt S."/>
            <person name="Jagels K."/>
            <person name="James K.D."/>
            <person name="Jones L."/>
            <person name="Jones M."/>
            <person name="Leather S."/>
            <person name="McDonald S."/>
            <person name="McLean J."/>
            <person name="Mooney P."/>
            <person name="Moule S."/>
            <person name="Mungall K.L."/>
            <person name="Murphy L.D."/>
            <person name="Niblett D."/>
            <person name="Odell C."/>
            <person name="Oliver K."/>
            <person name="O'Neil S."/>
            <person name="Pearson D."/>
            <person name="Quail M.A."/>
            <person name="Rabbinowitsch E."/>
            <person name="Rutherford K.M."/>
            <person name="Rutter S."/>
            <person name="Saunders D."/>
            <person name="Seeger K."/>
            <person name="Sharp S."/>
            <person name="Skelton J."/>
            <person name="Simmonds M.N."/>
            <person name="Squares R."/>
            <person name="Squares S."/>
            <person name="Stevens K."/>
            <person name="Taylor K."/>
            <person name="Taylor R.G."/>
            <person name="Tivey A."/>
            <person name="Walsh S.V."/>
            <person name="Warren T."/>
            <person name="Whitehead S."/>
            <person name="Woodward J.R."/>
            <person name="Volckaert G."/>
            <person name="Aert R."/>
            <person name="Robben J."/>
            <person name="Grymonprez B."/>
            <person name="Weltjens I."/>
            <person name="Vanstreels E."/>
            <person name="Rieger M."/>
            <person name="Schaefer M."/>
            <person name="Mueller-Auer S."/>
            <person name="Gabel C."/>
            <person name="Fuchs M."/>
            <person name="Duesterhoeft A."/>
            <person name="Fritzc C."/>
            <person name="Holzer E."/>
            <person name="Moestl D."/>
            <person name="Hilbert H."/>
            <person name="Borzym K."/>
            <person name="Langer I."/>
            <person name="Beck A."/>
            <person name="Lehrach H."/>
            <person name="Reinhardt R."/>
            <person name="Pohl T.M."/>
            <person name="Eger P."/>
            <person name="Zimmermann W."/>
            <person name="Wedler H."/>
            <person name="Wambutt R."/>
            <person name="Purnelle B."/>
            <person name="Goffeau A."/>
            <person name="Cadieu E."/>
            <person name="Dreano S."/>
            <person name="Gloux S."/>
            <person name="Lelaure V."/>
            <person name="Mottier S."/>
            <person name="Galibert F."/>
            <person name="Aves S.J."/>
            <person name="Xiang Z."/>
            <person name="Hunt C."/>
            <person name="Moore K."/>
            <person name="Hurst S.M."/>
            <person name="Lucas M."/>
            <person name="Rochet M."/>
            <person name="Gaillardin C."/>
            <person name="Tallada V.A."/>
            <person name="Garzon A."/>
            <person name="Thode G."/>
            <person name="Daga R.R."/>
            <person name="Cruzado L."/>
            <person name="Jimenez J."/>
            <person name="Sanchez M."/>
            <person name="del Rey F."/>
            <person name="Benito J."/>
            <person name="Dominguez A."/>
            <person name="Revuelta J.L."/>
            <person name="Moreno S."/>
            <person name="Armstrong J."/>
            <person name="Forsburg S.L."/>
            <person name="Cerutti L."/>
            <person name="Lowe T."/>
            <person name="McCombie W.R."/>
            <person name="Paulsen I."/>
            <person name="Potashkin J."/>
            <person name="Shpakovski G.V."/>
            <person name="Ussery D."/>
            <person name="Barrell B.G."/>
            <person name="Nurse P."/>
        </authorList>
    </citation>
    <scope>NUCLEOTIDE SEQUENCE [LARGE SCALE GENOMIC DNA]</scope>
    <source>
        <strain>972 / ATCC 24843</strain>
    </source>
</reference>
<accession>Q9HDU2</accession>
<organism>
    <name type="scientific">Schizosaccharomyces pombe (strain 972 / ATCC 24843)</name>
    <name type="common">Fission yeast</name>
    <dbReference type="NCBI Taxonomy" id="284812"/>
    <lineage>
        <taxon>Eukaryota</taxon>
        <taxon>Fungi</taxon>
        <taxon>Dikarya</taxon>
        <taxon>Ascomycota</taxon>
        <taxon>Taphrinomycotina</taxon>
        <taxon>Schizosaccharomycetes</taxon>
        <taxon>Schizosaccharomycetales</taxon>
        <taxon>Schizosaccharomycetaceae</taxon>
        <taxon>Schizosaccharomyces</taxon>
    </lineage>
</organism>
<name>GAL1_SCHPO</name>